<dbReference type="EMBL" id="CP009811">
    <property type="protein sequence ID" value="ATZ51943.1"/>
    <property type="molecule type" value="Genomic_DNA"/>
</dbReference>
<dbReference type="RefSeq" id="XP_001554067.1">
    <property type="nucleotide sequence ID" value="XM_001554017.1"/>
</dbReference>
<dbReference type="SMR" id="A6S3N2"/>
<dbReference type="EnsemblFungi" id="Bcin07g04880.1">
    <property type="protein sequence ID" value="Bcin07p04880.1"/>
    <property type="gene ID" value="Bcin07g04880"/>
</dbReference>
<dbReference type="GeneID" id="5434592"/>
<dbReference type="KEGG" id="bfu:BCIN_07g04880"/>
<dbReference type="VEuPathDB" id="FungiDB:Bcin07g04880"/>
<dbReference type="OrthoDB" id="75724at2759"/>
<dbReference type="Proteomes" id="UP000001798">
    <property type="component" value="Chromosome bcin07"/>
</dbReference>
<dbReference type="GO" id="GO:0032541">
    <property type="term" value="C:cortical endoplasmic reticulum"/>
    <property type="evidence" value="ECO:0007669"/>
    <property type="project" value="TreeGrafter"/>
</dbReference>
<dbReference type="GO" id="GO:0005829">
    <property type="term" value="C:cytosol"/>
    <property type="evidence" value="ECO:0007669"/>
    <property type="project" value="TreeGrafter"/>
</dbReference>
<dbReference type="GO" id="GO:0005789">
    <property type="term" value="C:endoplasmic reticulum membrane"/>
    <property type="evidence" value="ECO:0007669"/>
    <property type="project" value="UniProtKB-SubCell"/>
</dbReference>
<dbReference type="GO" id="GO:0005886">
    <property type="term" value="C:plasma membrane"/>
    <property type="evidence" value="ECO:0007669"/>
    <property type="project" value="TreeGrafter"/>
</dbReference>
<dbReference type="GO" id="GO:0046872">
    <property type="term" value="F:metal ion binding"/>
    <property type="evidence" value="ECO:0007669"/>
    <property type="project" value="UniProtKB-KW"/>
</dbReference>
<dbReference type="GO" id="GO:0008526">
    <property type="term" value="F:phosphatidylinositol transfer activity"/>
    <property type="evidence" value="ECO:0007669"/>
    <property type="project" value="InterPro"/>
</dbReference>
<dbReference type="GO" id="GO:0043001">
    <property type="term" value="P:Golgi to plasma membrane protein transport"/>
    <property type="evidence" value="ECO:0007669"/>
    <property type="project" value="TreeGrafter"/>
</dbReference>
<dbReference type="GO" id="GO:0017157">
    <property type="term" value="P:regulation of exocytosis"/>
    <property type="evidence" value="ECO:0007669"/>
    <property type="project" value="TreeGrafter"/>
</dbReference>
<dbReference type="CDD" id="cd00170">
    <property type="entry name" value="SEC14"/>
    <property type="match status" value="1"/>
</dbReference>
<dbReference type="FunFam" id="3.40.525.10:FF:000017">
    <property type="entry name" value="Phosphatidylinositol transfer protein sfh5"/>
    <property type="match status" value="1"/>
</dbReference>
<dbReference type="Gene3D" id="3.40.525.10">
    <property type="entry name" value="CRAL-TRIO lipid binding domain"/>
    <property type="match status" value="1"/>
</dbReference>
<dbReference type="InterPro" id="IPR001251">
    <property type="entry name" value="CRAL-TRIO_dom"/>
</dbReference>
<dbReference type="InterPro" id="IPR036865">
    <property type="entry name" value="CRAL-TRIO_dom_sf"/>
</dbReference>
<dbReference type="InterPro" id="IPR011074">
    <property type="entry name" value="CRAL/TRIO_N_dom"/>
</dbReference>
<dbReference type="InterPro" id="IPR036273">
    <property type="entry name" value="CRAL/TRIO_N_dom_sf"/>
</dbReference>
<dbReference type="InterPro" id="IPR042938">
    <property type="entry name" value="Sfh5"/>
</dbReference>
<dbReference type="PANTHER" id="PTHR47669">
    <property type="entry name" value="PHOSPHATIDYLINOSITOL TRANSFER PROTEIN SFH5"/>
    <property type="match status" value="1"/>
</dbReference>
<dbReference type="PANTHER" id="PTHR47669:SF1">
    <property type="entry name" value="PHOSPHATIDYLINOSITOL TRANSFER PROTEIN SFH5"/>
    <property type="match status" value="1"/>
</dbReference>
<dbReference type="Pfam" id="PF00650">
    <property type="entry name" value="CRAL_TRIO"/>
    <property type="match status" value="1"/>
</dbReference>
<dbReference type="Pfam" id="PF03765">
    <property type="entry name" value="CRAL_TRIO_N"/>
    <property type="match status" value="1"/>
</dbReference>
<dbReference type="SMART" id="SM00516">
    <property type="entry name" value="SEC14"/>
    <property type="match status" value="1"/>
</dbReference>
<dbReference type="SUPFAM" id="SSF52087">
    <property type="entry name" value="CRAL/TRIO domain"/>
    <property type="match status" value="1"/>
</dbReference>
<dbReference type="SUPFAM" id="SSF46938">
    <property type="entry name" value="CRAL/TRIO N-terminal domain"/>
    <property type="match status" value="1"/>
</dbReference>
<dbReference type="PROSITE" id="PS50191">
    <property type="entry name" value="CRAL_TRIO"/>
    <property type="match status" value="1"/>
</dbReference>
<gene>
    <name type="primary">sfh5</name>
    <name type="ORF">BC1G_07204</name>
    <name type="ORF">BCIN_07g04880</name>
</gene>
<name>SFH5_BOTFB</name>
<keyword id="KW-0963">Cytoplasm</keyword>
<keyword id="KW-0256">Endoplasmic reticulum</keyword>
<keyword id="KW-0349">Heme</keyword>
<keyword id="KW-0408">Iron</keyword>
<keyword id="KW-0445">Lipid transport</keyword>
<keyword id="KW-0472">Membrane</keyword>
<keyword id="KW-0479">Metal-binding</keyword>
<keyword id="KW-0492">Microsome</keyword>
<keyword id="KW-1185">Reference proteome</keyword>
<keyword id="KW-0813">Transport</keyword>
<comment type="function">
    <text evidence="2">Non-classical phosphatidylinositol (PtdIns) transfer protein (PITP), which exhibits PtdIns-binding/transfer activity in the absence of detectable PtdCho-binding/transfer activity. Regulates PtdIns(4,5)P2 homeostasis at the plasma membrane. Heme-binding protein that may play a role in organic oxidant-induced stress responses.</text>
</comment>
<comment type="catalytic activity">
    <reaction evidence="2">
        <text>a 1,2-diacyl-sn-glycero-3-phospho-(1D-myo-inositol)(in) = a 1,2-diacyl-sn-glycero-3-phospho-(1D-myo-inositol)(out)</text>
        <dbReference type="Rhea" id="RHEA:38691"/>
        <dbReference type="ChEBI" id="CHEBI:57880"/>
    </reaction>
    <physiologicalReaction direction="left-to-right" evidence="2">
        <dbReference type="Rhea" id="RHEA:38692"/>
    </physiologicalReaction>
</comment>
<comment type="cofactor">
    <cofactor evidence="1">
        <name>heme b</name>
        <dbReference type="ChEBI" id="CHEBI:60344"/>
    </cofactor>
</comment>
<comment type="subcellular location">
    <subcellularLocation>
        <location evidence="2">Cytoplasm</location>
    </subcellularLocation>
    <subcellularLocation>
        <location evidence="2">Endoplasmic reticulum membrane</location>
        <topology evidence="2">Peripheral membrane protein</topology>
    </subcellularLocation>
    <subcellularLocation>
        <location evidence="2">Microsome membrane</location>
        <topology evidence="2">Peripheral membrane protein</topology>
    </subcellularLocation>
</comment>
<comment type="similarity">
    <text evidence="5">Belongs to the SFH5 family.</text>
</comment>
<protein>
    <recommendedName>
        <fullName>Phosphatidylinositol transfer protein sfh5</fullName>
        <shortName>PITP sfh5</shortName>
    </recommendedName>
</protein>
<organism>
    <name type="scientific">Botryotinia fuckeliana (strain B05.10)</name>
    <name type="common">Noble rot fungus</name>
    <name type="synonym">Botrytis cinerea</name>
    <dbReference type="NCBI Taxonomy" id="332648"/>
    <lineage>
        <taxon>Eukaryota</taxon>
        <taxon>Fungi</taxon>
        <taxon>Dikarya</taxon>
        <taxon>Ascomycota</taxon>
        <taxon>Pezizomycotina</taxon>
        <taxon>Leotiomycetes</taxon>
        <taxon>Helotiales</taxon>
        <taxon>Sclerotiniaceae</taxon>
        <taxon>Botrytis</taxon>
    </lineage>
</organism>
<reference key="1">
    <citation type="journal article" date="2011" name="PLoS Genet.">
        <title>Genomic analysis of the necrotrophic fungal pathogens Sclerotinia sclerotiorum and Botrytis cinerea.</title>
        <authorList>
            <person name="Amselem J."/>
            <person name="Cuomo C.A."/>
            <person name="van Kan J.A.L."/>
            <person name="Viaud M."/>
            <person name="Benito E.P."/>
            <person name="Couloux A."/>
            <person name="Coutinho P.M."/>
            <person name="de Vries R.P."/>
            <person name="Dyer P.S."/>
            <person name="Fillinger S."/>
            <person name="Fournier E."/>
            <person name="Gout L."/>
            <person name="Hahn M."/>
            <person name="Kohn L."/>
            <person name="Lapalu N."/>
            <person name="Plummer K.M."/>
            <person name="Pradier J.-M."/>
            <person name="Quevillon E."/>
            <person name="Sharon A."/>
            <person name="Simon A."/>
            <person name="ten Have A."/>
            <person name="Tudzynski B."/>
            <person name="Tudzynski P."/>
            <person name="Wincker P."/>
            <person name="Andrew M."/>
            <person name="Anthouard V."/>
            <person name="Beever R.E."/>
            <person name="Beffa R."/>
            <person name="Benoit I."/>
            <person name="Bouzid O."/>
            <person name="Brault B."/>
            <person name="Chen Z."/>
            <person name="Choquer M."/>
            <person name="Collemare J."/>
            <person name="Cotton P."/>
            <person name="Danchin E.G."/>
            <person name="Da Silva C."/>
            <person name="Gautier A."/>
            <person name="Giraud C."/>
            <person name="Giraud T."/>
            <person name="Gonzalez C."/>
            <person name="Grossetete S."/>
            <person name="Gueldener U."/>
            <person name="Henrissat B."/>
            <person name="Howlett B.J."/>
            <person name="Kodira C."/>
            <person name="Kretschmer M."/>
            <person name="Lappartient A."/>
            <person name="Leroch M."/>
            <person name="Levis C."/>
            <person name="Mauceli E."/>
            <person name="Neuveglise C."/>
            <person name="Oeser B."/>
            <person name="Pearson M."/>
            <person name="Poulain J."/>
            <person name="Poussereau N."/>
            <person name="Quesneville H."/>
            <person name="Rascle C."/>
            <person name="Schumacher J."/>
            <person name="Segurens B."/>
            <person name="Sexton A."/>
            <person name="Silva E."/>
            <person name="Sirven C."/>
            <person name="Soanes D.M."/>
            <person name="Talbot N.J."/>
            <person name="Templeton M."/>
            <person name="Yandava C."/>
            <person name="Yarden O."/>
            <person name="Zeng Q."/>
            <person name="Rollins J.A."/>
            <person name="Lebrun M.-H."/>
            <person name="Dickman M."/>
        </authorList>
    </citation>
    <scope>NUCLEOTIDE SEQUENCE [LARGE SCALE GENOMIC DNA]</scope>
    <source>
        <strain>B05.10</strain>
    </source>
</reference>
<reference key="2">
    <citation type="journal article" date="2012" name="Eukaryot. Cell">
        <title>Genome update of Botrytis cinerea strains B05.10 and T4.</title>
        <authorList>
            <person name="Staats M."/>
            <person name="van Kan J.A.L."/>
        </authorList>
    </citation>
    <scope>NUCLEOTIDE SEQUENCE [LARGE SCALE GENOMIC DNA]</scope>
    <scope>GENOME REANNOTATION</scope>
    <source>
        <strain>B05.10</strain>
    </source>
</reference>
<reference key="3">
    <citation type="journal article" date="2017" name="Mol. Plant Pathol.">
        <title>A gapless genome sequence of the fungus Botrytis cinerea.</title>
        <authorList>
            <person name="van Kan J.A.L."/>
            <person name="Stassen J.H.M."/>
            <person name="Mosbach A."/>
            <person name="van der Lee T.A.J."/>
            <person name="Faino L."/>
            <person name="Farmer A.D."/>
            <person name="Papasotiriou D.G."/>
            <person name="Zhou S."/>
            <person name="Seidl M.F."/>
            <person name="Cottam E."/>
            <person name="Edel D."/>
            <person name="Hahn M."/>
            <person name="Schwartz D.C."/>
            <person name="Dietrich R.A."/>
            <person name="Widdison S."/>
            <person name="Scalliet G."/>
        </authorList>
    </citation>
    <scope>NUCLEOTIDE SEQUENCE [LARGE SCALE GENOMIC DNA]</scope>
    <scope>GENOME REANNOTATION</scope>
    <source>
        <strain>B05.10</strain>
    </source>
</reference>
<proteinExistence type="inferred from homology"/>
<feature type="chain" id="PRO_0000324972" description="Phosphatidylinositol transfer protein sfh5">
    <location>
        <begin position="1"/>
        <end position="442"/>
    </location>
</feature>
<feature type="domain" description="CRAL-TRIO" evidence="3">
    <location>
        <begin position="251"/>
        <end position="426"/>
    </location>
</feature>
<feature type="region of interest" description="Disordered" evidence="4">
    <location>
        <begin position="1"/>
        <end position="119"/>
    </location>
</feature>
<feature type="region of interest" description="Disordered" evidence="4">
    <location>
        <begin position="141"/>
        <end position="170"/>
    </location>
</feature>
<feature type="compositionally biased region" description="Polar residues" evidence="4">
    <location>
        <begin position="1"/>
        <end position="10"/>
    </location>
</feature>
<feature type="compositionally biased region" description="Basic and acidic residues" evidence="4">
    <location>
        <begin position="25"/>
        <end position="54"/>
    </location>
</feature>
<feature type="compositionally biased region" description="Polar residues" evidence="4">
    <location>
        <begin position="58"/>
        <end position="92"/>
    </location>
</feature>
<feature type="compositionally biased region" description="Polar residues" evidence="4">
    <location>
        <begin position="101"/>
        <end position="117"/>
    </location>
</feature>
<feature type="binding site" evidence="1">
    <location>
        <position position="276"/>
    </location>
    <ligand>
        <name>heme</name>
        <dbReference type="ChEBI" id="CHEBI:30413"/>
    </ligand>
</feature>
<feature type="binding site" evidence="1">
    <location>
        <position position="296"/>
    </location>
    <ligand>
        <name>heme</name>
        <dbReference type="ChEBI" id="CHEBI:30413"/>
    </ligand>
</feature>
<feature type="binding site" evidence="1">
    <location>
        <position position="330"/>
    </location>
    <ligand>
        <name>heme</name>
        <dbReference type="ChEBI" id="CHEBI:30413"/>
    </ligand>
</feature>
<feature type="binding site" description="proximal binding residue" evidence="1">
    <location>
        <position position="332"/>
    </location>
    <ligand>
        <name>heme</name>
        <dbReference type="ChEBI" id="CHEBI:30413"/>
    </ligand>
    <ligandPart>
        <name>Fe</name>
        <dbReference type="ChEBI" id="CHEBI:18248"/>
    </ligandPart>
</feature>
<feature type="binding site" evidence="1">
    <location>
        <position position="366"/>
    </location>
    <ligand>
        <name>heme</name>
        <dbReference type="ChEBI" id="CHEBI:30413"/>
    </ligand>
</feature>
<evidence type="ECO:0000250" key="1">
    <source>
        <dbReference type="UniProtKB" id="A6ZQI5"/>
    </source>
</evidence>
<evidence type="ECO:0000250" key="2">
    <source>
        <dbReference type="UniProtKB" id="P47008"/>
    </source>
</evidence>
<evidence type="ECO:0000255" key="3">
    <source>
        <dbReference type="PROSITE-ProRule" id="PRU00056"/>
    </source>
</evidence>
<evidence type="ECO:0000256" key="4">
    <source>
        <dbReference type="SAM" id="MobiDB-lite"/>
    </source>
</evidence>
<evidence type="ECO:0000305" key="5"/>
<accession>A6S3N2</accession>
<accession>A0A384JN07</accession>
<sequence>MSAEPNNNQAKADVPEEVVEPKPTTVEEPKSTTVEEPKSTTVEESKSTTVEEPKSTTAEQPKSTIEQDPKPSTTESSPVQIDDSTPIPQITTEEPKPTVAEPSTTESVTAEPTTEQPQEAAVKLESVKEADAEAAAKLEATKDADVEKAASTSQHSVSFDKATKTHDGSPLSKFYSELPAILEAAEYNEMWGIVLDPSETHVQTSIVLEKFLRANAKDVPKAKAQLIEALKWRKTMQPQKLLESTEFDKVKFGNLGYVTSYNTTEGGKEVITWNIYGAVKDVKKTFSDVPEFLKWRAALMELSIKELDLASATEKIPENGPDPYRMIQVHDYLNVSFLRMDPSIRAASKETIQTFSMAYPELLKEKFFVNVPLVMGWVFTAMKIFLSADTIKKFHPLSYGSNLGSEIPNVAEQLPKEYGGKGGELKSGLTVKYSEGEASKTA</sequence>